<evidence type="ECO:0000255" key="1">
    <source>
        <dbReference type="HAMAP-Rule" id="MF_01341"/>
    </source>
</evidence>
<evidence type="ECO:0000256" key="2">
    <source>
        <dbReference type="SAM" id="MobiDB-lite"/>
    </source>
</evidence>
<evidence type="ECO:0000305" key="3"/>
<keyword id="KW-1185">Reference proteome</keyword>
<keyword id="KW-0687">Ribonucleoprotein</keyword>
<keyword id="KW-0689">Ribosomal protein</keyword>
<keyword id="KW-0694">RNA-binding</keyword>
<keyword id="KW-0699">rRNA-binding</keyword>
<feature type="chain" id="PRO_1000054447" description="Large ribosomal subunit protein uL15">
    <location>
        <begin position="1"/>
        <end position="144"/>
    </location>
</feature>
<feature type="region of interest" description="Disordered" evidence="2">
    <location>
        <begin position="1"/>
        <end position="54"/>
    </location>
</feature>
<feature type="compositionally biased region" description="Gly residues" evidence="2">
    <location>
        <begin position="21"/>
        <end position="31"/>
    </location>
</feature>
<gene>
    <name evidence="1" type="primary">rplO</name>
    <name type="ordered locus">CKO_04713</name>
</gene>
<reference key="1">
    <citation type="submission" date="2007-08" db="EMBL/GenBank/DDBJ databases">
        <authorList>
            <consortium name="The Citrobacter koseri Genome Sequencing Project"/>
            <person name="McClelland M."/>
            <person name="Sanderson E.K."/>
            <person name="Porwollik S."/>
            <person name="Spieth J."/>
            <person name="Clifton W.S."/>
            <person name="Latreille P."/>
            <person name="Courtney L."/>
            <person name="Wang C."/>
            <person name="Pepin K."/>
            <person name="Bhonagiri V."/>
            <person name="Nash W."/>
            <person name="Johnson M."/>
            <person name="Thiruvilangam P."/>
            <person name="Wilson R."/>
        </authorList>
    </citation>
    <scope>NUCLEOTIDE SEQUENCE [LARGE SCALE GENOMIC DNA]</scope>
    <source>
        <strain>ATCC BAA-895 / CDC 4225-83 / SGSC4696</strain>
    </source>
</reference>
<protein>
    <recommendedName>
        <fullName evidence="1">Large ribosomal subunit protein uL15</fullName>
    </recommendedName>
    <alternativeName>
        <fullName evidence="3">50S ribosomal protein L15</fullName>
    </alternativeName>
</protein>
<comment type="function">
    <text evidence="1">Binds to the 23S rRNA.</text>
</comment>
<comment type="subunit">
    <text evidence="1">Part of the 50S ribosomal subunit.</text>
</comment>
<comment type="similarity">
    <text evidence="1">Belongs to the universal ribosomal protein uL15 family.</text>
</comment>
<sequence>MRLNTLSPAEGSKKAGKRLGRGIGSGLGKTGGRGHKGQKSRSGGGVRRGFEGGQMPLYRRLPKFGFTSRKAAITAEVRLSDLAKVEGGVVDLNTLKAANIIGIQIEFAKVILAGEVTTPVTVRGLRVTKGARAAIEAAGGKIEE</sequence>
<accession>A8AQJ5</accession>
<name>RL15_CITK8</name>
<proteinExistence type="inferred from homology"/>
<dbReference type="EMBL" id="CP000822">
    <property type="protein sequence ID" value="ABV15758.1"/>
    <property type="molecule type" value="Genomic_DNA"/>
</dbReference>
<dbReference type="RefSeq" id="WP_001238917.1">
    <property type="nucleotide sequence ID" value="NC_009792.1"/>
</dbReference>
<dbReference type="SMR" id="A8AQJ5"/>
<dbReference type="STRING" id="290338.CKO_04713"/>
<dbReference type="GeneID" id="93778686"/>
<dbReference type="KEGG" id="cko:CKO_04713"/>
<dbReference type="HOGENOM" id="CLU_055188_4_2_6"/>
<dbReference type="OrthoDB" id="9810293at2"/>
<dbReference type="Proteomes" id="UP000008148">
    <property type="component" value="Chromosome"/>
</dbReference>
<dbReference type="GO" id="GO:0022625">
    <property type="term" value="C:cytosolic large ribosomal subunit"/>
    <property type="evidence" value="ECO:0007669"/>
    <property type="project" value="TreeGrafter"/>
</dbReference>
<dbReference type="GO" id="GO:0019843">
    <property type="term" value="F:rRNA binding"/>
    <property type="evidence" value="ECO:0007669"/>
    <property type="project" value="UniProtKB-UniRule"/>
</dbReference>
<dbReference type="GO" id="GO:0003735">
    <property type="term" value="F:structural constituent of ribosome"/>
    <property type="evidence" value="ECO:0007669"/>
    <property type="project" value="InterPro"/>
</dbReference>
<dbReference type="GO" id="GO:0006412">
    <property type="term" value="P:translation"/>
    <property type="evidence" value="ECO:0007669"/>
    <property type="project" value="UniProtKB-UniRule"/>
</dbReference>
<dbReference type="FunFam" id="3.100.10.10:FF:000003">
    <property type="entry name" value="50S ribosomal protein L15"/>
    <property type="match status" value="1"/>
</dbReference>
<dbReference type="Gene3D" id="3.100.10.10">
    <property type="match status" value="1"/>
</dbReference>
<dbReference type="HAMAP" id="MF_01341">
    <property type="entry name" value="Ribosomal_uL15"/>
    <property type="match status" value="1"/>
</dbReference>
<dbReference type="InterPro" id="IPR030878">
    <property type="entry name" value="Ribosomal_uL15"/>
</dbReference>
<dbReference type="InterPro" id="IPR021131">
    <property type="entry name" value="Ribosomal_uL15/eL18"/>
</dbReference>
<dbReference type="InterPro" id="IPR036227">
    <property type="entry name" value="Ribosomal_uL15/eL18_sf"/>
</dbReference>
<dbReference type="InterPro" id="IPR005749">
    <property type="entry name" value="Ribosomal_uL15_bac-type"/>
</dbReference>
<dbReference type="InterPro" id="IPR001196">
    <property type="entry name" value="Ribosomal_uL15_CS"/>
</dbReference>
<dbReference type="NCBIfam" id="TIGR01071">
    <property type="entry name" value="rplO_bact"/>
    <property type="match status" value="1"/>
</dbReference>
<dbReference type="PANTHER" id="PTHR12934">
    <property type="entry name" value="50S RIBOSOMAL PROTEIN L15"/>
    <property type="match status" value="1"/>
</dbReference>
<dbReference type="PANTHER" id="PTHR12934:SF11">
    <property type="entry name" value="LARGE RIBOSOMAL SUBUNIT PROTEIN UL15M"/>
    <property type="match status" value="1"/>
</dbReference>
<dbReference type="Pfam" id="PF00828">
    <property type="entry name" value="Ribosomal_L27A"/>
    <property type="match status" value="1"/>
</dbReference>
<dbReference type="SUPFAM" id="SSF52080">
    <property type="entry name" value="Ribosomal proteins L15p and L18e"/>
    <property type="match status" value="1"/>
</dbReference>
<dbReference type="PROSITE" id="PS00475">
    <property type="entry name" value="RIBOSOMAL_L15"/>
    <property type="match status" value="1"/>
</dbReference>
<organism>
    <name type="scientific">Citrobacter koseri (strain ATCC BAA-895 / CDC 4225-83 / SGSC4696)</name>
    <dbReference type="NCBI Taxonomy" id="290338"/>
    <lineage>
        <taxon>Bacteria</taxon>
        <taxon>Pseudomonadati</taxon>
        <taxon>Pseudomonadota</taxon>
        <taxon>Gammaproteobacteria</taxon>
        <taxon>Enterobacterales</taxon>
        <taxon>Enterobacteriaceae</taxon>
        <taxon>Citrobacter</taxon>
    </lineage>
</organism>